<reference key="1">
    <citation type="journal article" date="1999" name="J. Bacteriol.">
        <title>Poly-3-hydroxybutyrate degradation in Rhizobium (Sinorhizobium) meliloti: isolation and characterization of a gene encoding 3-hydroxybutyrate dehydrogenase.</title>
        <authorList>
            <person name="Aneja P."/>
            <person name="Charles T.C."/>
        </authorList>
    </citation>
    <scope>NUCLEOTIDE SEQUENCE [GENOMIC DNA]</scope>
    <source>
        <strain>SU47 / 1021</strain>
    </source>
</reference>
<reference key="2">
    <citation type="journal article" date="2001" name="Proc. Natl. Acad. Sci. U.S.A.">
        <title>The complete sequence of the 1,683-kb pSymB megaplasmid from the N2-fixing endosymbiont Sinorhizobium meliloti.</title>
        <authorList>
            <person name="Finan T.M."/>
            <person name="Weidner S."/>
            <person name="Wong K."/>
            <person name="Buhrmester J."/>
            <person name="Chain P."/>
            <person name="Vorhoelter F.J."/>
            <person name="Hernandez-Lucas I."/>
            <person name="Becker A."/>
            <person name="Cowie A."/>
            <person name="Gouzy J."/>
            <person name="Golding B."/>
            <person name="Puehler A."/>
        </authorList>
    </citation>
    <scope>NUCLEOTIDE SEQUENCE [LARGE SCALE GENOMIC DNA]</scope>
    <source>
        <strain>1021</strain>
    </source>
</reference>
<reference key="3">
    <citation type="journal article" date="2001" name="Science">
        <title>The composite genome of the legume symbiont Sinorhizobium meliloti.</title>
        <authorList>
            <person name="Galibert F."/>
            <person name="Finan T.M."/>
            <person name="Long S.R."/>
            <person name="Puehler A."/>
            <person name="Abola P."/>
            <person name="Ampe F."/>
            <person name="Barloy-Hubler F."/>
            <person name="Barnett M.J."/>
            <person name="Becker A."/>
            <person name="Boistard P."/>
            <person name="Bothe G."/>
            <person name="Boutry M."/>
            <person name="Bowser L."/>
            <person name="Buhrmester J."/>
            <person name="Cadieu E."/>
            <person name="Capela D."/>
            <person name="Chain P."/>
            <person name="Cowie A."/>
            <person name="Davis R.W."/>
            <person name="Dreano S."/>
            <person name="Federspiel N.A."/>
            <person name="Fisher R.F."/>
            <person name="Gloux S."/>
            <person name="Godrie T."/>
            <person name="Goffeau A."/>
            <person name="Golding B."/>
            <person name="Gouzy J."/>
            <person name="Gurjal M."/>
            <person name="Hernandez-Lucas I."/>
            <person name="Hong A."/>
            <person name="Huizar L."/>
            <person name="Hyman R.W."/>
            <person name="Jones T."/>
            <person name="Kahn D."/>
            <person name="Kahn M.L."/>
            <person name="Kalman S."/>
            <person name="Keating D.H."/>
            <person name="Kiss E."/>
            <person name="Komp C."/>
            <person name="Lelaure V."/>
            <person name="Masuy D."/>
            <person name="Palm C."/>
            <person name="Peck M.C."/>
            <person name="Pohl T.M."/>
            <person name="Portetelle D."/>
            <person name="Purnelle B."/>
            <person name="Ramsperger U."/>
            <person name="Surzycki R."/>
            <person name="Thebault P."/>
            <person name="Vandenbol M."/>
            <person name="Vorhoelter F.J."/>
            <person name="Weidner S."/>
            <person name="Wells D.H."/>
            <person name="Wong K."/>
            <person name="Yeh K.-C."/>
            <person name="Batut J."/>
        </authorList>
    </citation>
    <scope>NUCLEOTIDE SEQUENCE [LARGE SCALE GENOMIC DNA]</scope>
    <source>
        <strain>1021</strain>
    </source>
</reference>
<dbReference type="EC" id="1.1.1.30"/>
<dbReference type="EMBL" id="AF080548">
    <property type="protein sequence ID" value="AAD12733.1"/>
    <property type="molecule type" value="Genomic_DNA"/>
</dbReference>
<dbReference type="EMBL" id="AL591985">
    <property type="protein sequence ID" value="CAC49536.1"/>
    <property type="molecule type" value="Genomic_DNA"/>
</dbReference>
<dbReference type="PIR" id="H95983">
    <property type="entry name" value="H95983"/>
</dbReference>
<dbReference type="RefSeq" id="NP_437676.1">
    <property type="nucleotide sequence ID" value="NC_003078.1"/>
</dbReference>
<dbReference type="RefSeq" id="WP_010975968.1">
    <property type="nucleotide sequence ID" value="NC_003078.1"/>
</dbReference>
<dbReference type="PDB" id="3V2H">
    <property type="method" value="X-ray"/>
    <property type="resolution" value="3.00 A"/>
    <property type="chains" value="A/B=1-258"/>
</dbReference>
<dbReference type="PDBsum" id="3V2H"/>
<dbReference type="SMR" id="O86034"/>
<dbReference type="EnsemblBacteria" id="CAC49536">
    <property type="protein sequence ID" value="CAC49536"/>
    <property type="gene ID" value="SM_b21010"/>
</dbReference>
<dbReference type="KEGG" id="sme:SM_b21010"/>
<dbReference type="PATRIC" id="fig|266834.11.peg.6065"/>
<dbReference type="eggNOG" id="COG1028">
    <property type="taxonomic scope" value="Bacteria"/>
</dbReference>
<dbReference type="HOGENOM" id="CLU_010194_1_0_5"/>
<dbReference type="OrthoDB" id="9804774at2"/>
<dbReference type="EvolutionaryTrace" id="O86034"/>
<dbReference type="Proteomes" id="UP000001976">
    <property type="component" value="Plasmid pSymB"/>
</dbReference>
<dbReference type="GO" id="GO:0003858">
    <property type="term" value="F:3-hydroxybutyrate dehydrogenase activity"/>
    <property type="evidence" value="ECO:0007669"/>
    <property type="project" value="UniProtKB-EC"/>
</dbReference>
<dbReference type="GO" id="GO:0006629">
    <property type="term" value="P:lipid metabolic process"/>
    <property type="evidence" value="ECO:0007669"/>
    <property type="project" value="UniProtKB-ARBA"/>
</dbReference>
<dbReference type="GO" id="GO:0032787">
    <property type="term" value="P:monocarboxylic acid metabolic process"/>
    <property type="evidence" value="ECO:0007669"/>
    <property type="project" value="UniProtKB-ARBA"/>
</dbReference>
<dbReference type="CDD" id="cd08940">
    <property type="entry name" value="HBDH_SDR_c"/>
    <property type="match status" value="1"/>
</dbReference>
<dbReference type="FunFam" id="3.40.50.720:FF:000084">
    <property type="entry name" value="Short-chain dehydrogenase reductase"/>
    <property type="match status" value="1"/>
</dbReference>
<dbReference type="Gene3D" id="3.40.50.720">
    <property type="entry name" value="NAD(P)-binding Rossmann-like Domain"/>
    <property type="match status" value="1"/>
</dbReference>
<dbReference type="InterPro" id="IPR011294">
    <property type="entry name" value="3-OHbutyrate_DH"/>
</dbReference>
<dbReference type="InterPro" id="IPR036291">
    <property type="entry name" value="NAD(P)-bd_dom_sf"/>
</dbReference>
<dbReference type="InterPro" id="IPR020904">
    <property type="entry name" value="Sc_DH/Rdtase_CS"/>
</dbReference>
<dbReference type="InterPro" id="IPR050259">
    <property type="entry name" value="SDR"/>
</dbReference>
<dbReference type="InterPro" id="IPR002347">
    <property type="entry name" value="SDR_fam"/>
</dbReference>
<dbReference type="NCBIfam" id="TIGR01963">
    <property type="entry name" value="PHB_DH"/>
    <property type="match status" value="1"/>
</dbReference>
<dbReference type="NCBIfam" id="NF009093">
    <property type="entry name" value="PRK12429.1"/>
    <property type="match status" value="1"/>
</dbReference>
<dbReference type="PANTHER" id="PTHR42879">
    <property type="entry name" value="3-OXOACYL-(ACYL-CARRIER-PROTEIN) REDUCTASE"/>
    <property type="match status" value="1"/>
</dbReference>
<dbReference type="PANTHER" id="PTHR42879:SF2">
    <property type="entry name" value="3-OXOACYL-[ACYL-CARRIER-PROTEIN] REDUCTASE FABG"/>
    <property type="match status" value="1"/>
</dbReference>
<dbReference type="Pfam" id="PF00106">
    <property type="entry name" value="adh_short"/>
    <property type="match status" value="1"/>
</dbReference>
<dbReference type="PRINTS" id="PR00081">
    <property type="entry name" value="GDHRDH"/>
</dbReference>
<dbReference type="PRINTS" id="PR00080">
    <property type="entry name" value="SDRFAMILY"/>
</dbReference>
<dbReference type="SUPFAM" id="SSF51735">
    <property type="entry name" value="NAD(P)-binding Rossmann-fold domains"/>
    <property type="match status" value="1"/>
</dbReference>
<dbReference type="PROSITE" id="PS00061">
    <property type="entry name" value="ADH_SHORT"/>
    <property type="match status" value="1"/>
</dbReference>
<evidence type="ECO:0000250" key="1"/>
<evidence type="ECO:0000255" key="2">
    <source>
        <dbReference type="PROSITE-ProRule" id="PRU10001"/>
    </source>
</evidence>
<evidence type="ECO:0000305" key="3"/>
<evidence type="ECO:0007829" key="4">
    <source>
        <dbReference type="PDB" id="3V2H"/>
    </source>
</evidence>
<accession>O86034</accession>
<protein>
    <recommendedName>
        <fullName>D-beta-hydroxybutyrate dehydrogenase</fullName>
        <shortName>BDH</shortName>
        <ecNumber>1.1.1.30</ecNumber>
    </recommendedName>
    <alternativeName>
        <fullName>3-hydroxybutyrate dehydrogenase</fullName>
        <shortName>3-HBDH</shortName>
    </alternativeName>
</protein>
<comment type="catalytic activity">
    <reaction>
        <text>(R)-3-hydroxybutanoate + NAD(+) = acetoacetate + NADH + H(+)</text>
        <dbReference type="Rhea" id="RHEA:20521"/>
        <dbReference type="ChEBI" id="CHEBI:10983"/>
        <dbReference type="ChEBI" id="CHEBI:13705"/>
        <dbReference type="ChEBI" id="CHEBI:15378"/>
        <dbReference type="ChEBI" id="CHEBI:57540"/>
        <dbReference type="ChEBI" id="CHEBI:57945"/>
        <dbReference type="EC" id="1.1.1.30"/>
    </reaction>
</comment>
<comment type="similarity">
    <text evidence="3">Belongs to the short-chain dehydrogenases/reductases (SDR) family.</text>
</comment>
<keyword id="KW-0002">3D-structure</keyword>
<keyword id="KW-0520">NAD</keyword>
<keyword id="KW-0560">Oxidoreductase</keyword>
<keyword id="KW-0614">Plasmid</keyword>
<keyword id="KW-1185">Reference proteome</keyword>
<name>BDHA_RHIME</name>
<geneLocation type="plasmid">
    <name>pSymB</name>
    <name>megaplasmid 2</name>
</geneLocation>
<gene>
    <name type="primary">bdhA</name>
    <name type="ordered locus">RB1136</name>
    <name type="ORF">SMb21010</name>
</gene>
<proteinExistence type="evidence at protein level"/>
<sequence>MTKTAVITGSTSGIGLAIARTLAKAGANIVLNGFGAPDEIRTVTDEVAGLSSGTVLHHPADMTKPSEIADMMAMVADRFGGADILVNNAGVQFVEKIEDFPVEQWDRIIAVNLSSSFHTIRGAIPPMKKKGWGRIINIASAHGLVASPFKSAYVAAKHGIMGLTKTVALEVAESGVTVNSICPGYVLTPLVEKQIPDQARTRGITEEQVINEVMLKGQPTKKFITVEQVASLALYLAGDDAAQITGTHVSMDGGWTAQ</sequence>
<organism>
    <name type="scientific">Rhizobium meliloti (strain 1021)</name>
    <name type="common">Ensifer meliloti</name>
    <name type="synonym">Sinorhizobium meliloti</name>
    <dbReference type="NCBI Taxonomy" id="266834"/>
    <lineage>
        <taxon>Bacteria</taxon>
        <taxon>Pseudomonadati</taxon>
        <taxon>Pseudomonadota</taxon>
        <taxon>Alphaproteobacteria</taxon>
        <taxon>Hyphomicrobiales</taxon>
        <taxon>Rhizobiaceae</taxon>
        <taxon>Sinorhizobium/Ensifer group</taxon>
        <taxon>Sinorhizobium</taxon>
    </lineage>
</organism>
<feature type="chain" id="PRO_0000054528" description="D-beta-hydroxybutyrate dehydrogenase">
    <location>
        <begin position="1"/>
        <end position="258"/>
    </location>
</feature>
<feature type="active site" description="Proton acceptor" evidence="2">
    <location>
        <position position="153"/>
    </location>
</feature>
<feature type="binding site" evidence="1">
    <location>
        <begin position="6"/>
        <end position="30"/>
    </location>
    <ligand>
        <name>NAD(+)</name>
        <dbReference type="ChEBI" id="CHEBI:57540"/>
    </ligand>
</feature>
<feature type="binding site" evidence="1">
    <location>
        <position position="140"/>
    </location>
    <ligand>
        <name>substrate</name>
    </ligand>
</feature>
<feature type="strand" evidence="4">
    <location>
        <begin position="4"/>
        <end position="8"/>
    </location>
</feature>
<feature type="helix" evidence="4">
    <location>
        <begin position="13"/>
        <end position="24"/>
    </location>
</feature>
<feature type="strand" evidence="4">
    <location>
        <begin position="28"/>
        <end position="32"/>
    </location>
</feature>
<feature type="helix" evidence="4">
    <location>
        <begin position="37"/>
        <end position="48"/>
    </location>
</feature>
<feature type="strand" evidence="4">
    <location>
        <begin position="55"/>
        <end position="58"/>
    </location>
</feature>
<feature type="helix" evidence="4">
    <location>
        <begin position="65"/>
        <end position="78"/>
    </location>
</feature>
<feature type="strand" evidence="4">
    <location>
        <begin position="79"/>
        <end position="81"/>
    </location>
</feature>
<feature type="strand" evidence="4">
    <location>
        <begin position="83"/>
        <end position="87"/>
    </location>
</feature>
<feature type="helix" evidence="4">
    <location>
        <begin position="97"/>
        <end position="99"/>
    </location>
</feature>
<feature type="helix" evidence="4">
    <location>
        <begin position="102"/>
        <end position="112"/>
    </location>
</feature>
<feature type="helix" evidence="4">
    <location>
        <begin position="114"/>
        <end position="130"/>
    </location>
</feature>
<feature type="strand" evidence="4">
    <location>
        <begin position="133"/>
        <end position="138"/>
    </location>
</feature>
<feature type="helix" evidence="4">
    <location>
        <begin position="141"/>
        <end position="143"/>
    </location>
</feature>
<feature type="helix" evidence="4">
    <location>
        <begin position="151"/>
        <end position="171"/>
    </location>
</feature>
<feature type="helix" evidence="4">
    <location>
        <begin position="172"/>
        <end position="174"/>
    </location>
</feature>
<feature type="strand" evidence="4">
    <location>
        <begin position="176"/>
        <end position="183"/>
    </location>
</feature>
<feature type="helix" evidence="4">
    <location>
        <begin position="226"/>
        <end position="237"/>
    </location>
</feature>
<feature type="helix" evidence="4">
    <location>
        <begin position="240"/>
        <end position="243"/>
    </location>
</feature>
<feature type="strand" evidence="4">
    <location>
        <begin position="248"/>
        <end position="252"/>
    </location>
</feature>
<feature type="helix" evidence="4">
    <location>
        <begin position="255"/>
        <end position="257"/>
    </location>
</feature>